<sequence>MHPDDDPYADDGSGRLFWADAAADRVLDGDPEEPIVIKGGISPSGVPHLGNMNEIMRGYFVAAVLRERGHEVRQVFTSDDRDPLRGLPRKLADLDGEVVALGDVNAGALGQNLGAPYTEIPDPFGCCDSYGAHFSNLIQSSADRLGVDVEMVSNTETYANGGFEEVTRYLLEHVTAARDVLGEYQDKVDEEYVPFNPICEACGKVTETVTDVDADAGTVEYVCTDMDAGDQTIEGCGHEGTATLREGKLPWRFEWPAQWRTLGVDYEPFGKDHAEGSWPSGTDISRNVLGDEPPTPMVYEWFTLDGEPFSSSAGHVILVQDVLALLELPVVRYFFSKDPRRARDFSIEHLDQLVDEFDRMERVYFGEAADASEDERERAARVYPLLVDDIDADRVRIPFTFAAVLGMTEDSALREEIARREGHIPADADADTVADALTRVERAREWARRTNNEFNYRLARAEIPAHDFDDATAAALDELAAFLDDEDPDGEALQGEIYEAAKRHDIDIGAFFAAGYRLFFDEDQGPKLGPFLAKLDREFVVTRLRREG</sequence>
<organism>
    <name type="scientific">Halobacterium salinarum (strain ATCC 700922 / JCM 11081 / NRC-1)</name>
    <name type="common">Halobacterium halobium</name>
    <dbReference type="NCBI Taxonomy" id="64091"/>
    <lineage>
        <taxon>Archaea</taxon>
        <taxon>Methanobacteriati</taxon>
        <taxon>Methanobacteriota</taxon>
        <taxon>Stenosarchaea group</taxon>
        <taxon>Halobacteria</taxon>
        <taxon>Halobacteriales</taxon>
        <taxon>Halobacteriaceae</taxon>
        <taxon>Halobacterium</taxon>
        <taxon>Halobacterium salinarum NRC-34001</taxon>
    </lineage>
</organism>
<reference key="1">
    <citation type="journal article" date="2000" name="Proc. Natl. Acad. Sci. U.S.A.">
        <title>Genome sequence of Halobacterium species NRC-1.</title>
        <authorList>
            <person name="Ng W.V."/>
            <person name="Kennedy S.P."/>
            <person name="Mahairas G.G."/>
            <person name="Berquist B."/>
            <person name="Pan M."/>
            <person name="Shukla H.D."/>
            <person name="Lasky S.R."/>
            <person name="Baliga N.S."/>
            <person name="Thorsson V."/>
            <person name="Sbrogna J."/>
            <person name="Swartzell S."/>
            <person name="Weir D."/>
            <person name="Hall J."/>
            <person name="Dahl T.A."/>
            <person name="Welti R."/>
            <person name="Goo Y.A."/>
            <person name="Leithauser B."/>
            <person name="Keller K."/>
            <person name="Cruz R."/>
            <person name="Danson M.J."/>
            <person name="Hough D.W."/>
            <person name="Maddocks D.G."/>
            <person name="Jablonski P.E."/>
            <person name="Krebs M.P."/>
            <person name="Angevine C.M."/>
            <person name="Dale H."/>
            <person name="Isenbarger T.A."/>
            <person name="Peck R.F."/>
            <person name="Pohlschroder M."/>
            <person name="Spudich J.L."/>
            <person name="Jung K.-H."/>
            <person name="Alam M."/>
            <person name="Freitas T."/>
            <person name="Hou S."/>
            <person name="Daniels C.J."/>
            <person name="Dennis P.P."/>
            <person name="Omer A.D."/>
            <person name="Ebhardt H."/>
            <person name="Lowe T.M."/>
            <person name="Liang P."/>
            <person name="Riley M."/>
            <person name="Hood L."/>
            <person name="DasSarma S."/>
        </authorList>
    </citation>
    <scope>NUCLEOTIDE SEQUENCE [LARGE SCALE GENOMIC DNA]</scope>
    <source>
        <strain>ATCC 700922 / JCM 11081 / NRC-1</strain>
    </source>
</reference>
<accession>Q9HNN7</accession>
<protein>
    <recommendedName>
        <fullName evidence="1">Lysine--tRNA ligase</fullName>
        <ecNumber evidence="1">6.1.1.6</ecNumber>
    </recommendedName>
    <alternativeName>
        <fullName evidence="1">Lysyl-tRNA synthetase</fullName>
        <shortName evidence="1">LysRS</shortName>
    </alternativeName>
</protein>
<dbReference type="EC" id="6.1.1.6" evidence="1"/>
<dbReference type="EMBL" id="AE004437">
    <property type="protein sequence ID" value="AAG20183.1"/>
    <property type="molecule type" value="Genomic_DNA"/>
</dbReference>
<dbReference type="PIR" id="C84352">
    <property type="entry name" value="C84352"/>
</dbReference>
<dbReference type="RefSeq" id="WP_010903484.1">
    <property type="nucleotide sequence ID" value="NC_002607.1"/>
</dbReference>
<dbReference type="SMR" id="Q9HNN7"/>
<dbReference type="FunCoup" id="Q9HNN7">
    <property type="interactions" value="19"/>
</dbReference>
<dbReference type="STRING" id="64091.VNG_2017G"/>
<dbReference type="PaxDb" id="64091-VNG_2017G"/>
<dbReference type="GeneID" id="68694608"/>
<dbReference type="KEGG" id="hal:VNG_2017G"/>
<dbReference type="PATRIC" id="fig|64091.14.peg.1540"/>
<dbReference type="HOGENOM" id="CLU_025562_1_0_2"/>
<dbReference type="InParanoid" id="Q9HNN7"/>
<dbReference type="OrthoDB" id="6838at2157"/>
<dbReference type="PhylomeDB" id="Q9HNN7"/>
<dbReference type="Proteomes" id="UP000000554">
    <property type="component" value="Chromosome"/>
</dbReference>
<dbReference type="GO" id="GO:0005737">
    <property type="term" value="C:cytoplasm"/>
    <property type="evidence" value="ECO:0007669"/>
    <property type="project" value="UniProtKB-SubCell"/>
</dbReference>
<dbReference type="GO" id="GO:0005524">
    <property type="term" value="F:ATP binding"/>
    <property type="evidence" value="ECO:0007669"/>
    <property type="project" value="UniProtKB-UniRule"/>
</dbReference>
<dbReference type="GO" id="GO:0004824">
    <property type="term" value="F:lysine-tRNA ligase activity"/>
    <property type="evidence" value="ECO:0007669"/>
    <property type="project" value="UniProtKB-UniRule"/>
</dbReference>
<dbReference type="GO" id="GO:0000049">
    <property type="term" value="F:tRNA binding"/>
    <property type="evidence" value="ECO:0007669"/>
    <property type="project" value="InterPro"/>
</dbReference>
<dbReference type="GO" id="GO:0006430">
    <property type="term" value="P:lysyl-tRNA aminoacylation"/>
    <property type="evidence" value="ECO:0007669"/>
    <property type="project" value="UniProtKB-UniRule"/>
</dbReference>
<dbReference type="Gene3D" id="1.10.10.350">
    <property type="match status" value="1"/>
</dbReference>
<dbReference type="Gene3D" id="1.10.10.770">
    <property type="match status" value="1"/>
</dbReference>
<dbReference type="Gene3D" id="3.40.50.620">
    <property type="entry name" value="HUPs"/>
    <property type="match status" value="1"/>
</dbReference>
<dbReference type="HAMAP" id="MF_00177">
    <property type="entry name" value="Lys_tRNA_synth_class1"/>
    <property type="match status" value="1"/>
</dbReference>
<dbReference type="InterPro" id="IPR020751">
    <property type="entry name" value="aa-tRNA-synth_I_codon-bd_sub2"/>
</dbReference>
<dbReference type="InterPro" id="IPR001412">
    <property type="entry name" value="aa-tRNA-synth_I_CS"/>
</dbReference>
<dbReference type="InterPro" id="IPR008925">
    <property type="entry name" value="aa_tRNA-synth_I_cd-bd_sf"/>
</dbReference>
<dbReference type="InterPro" id="IPR002904">
    <property type="entry name" value="Lys-tRNA-ligase"/>
</dbReference>
<dbReference type="InterPro" id="IPR014729">
    <property type="entry name" value="Rossmann-like_a/b/a_fold"/>
</dbReference>
<dbReference type="NCBIfam" id="TIGR00467">
    <property type="entry name" value="lysS_arch"/>
    <property type="match status" value="1"/>
</dbReference>
<dbReference type="PANTHER" id="PTHR37940">
    <property type="entry name" value="LYSINE--TRNA LIGASE"/>
    <property type="match status" value="1"/>
</dbReference>
<dbReference type="PANTHER" id="PTHR37940:SF1">
    <property type="entry name" value="LYSINE--TRNA LIGASE"/>
    <property type="match status" value="1"/>
</dbReference>
<dbReference type="Pfam" id="PF01921">
    <property type="entry name" value="tRNA-synt_1f"/>
    <property type="match status" value="1"/>
</dbReference>
<dbReference type="SUPFAM" id="SSF48163">
    <property type="entry name" value="An anticodon-binding domain of class I aminoacyl-tRNA synthetases"/>
    <property type="match status" value="1"/>
</dbReference>
<dbReference type="SUPFAM" id="SSF52374">
    <property type="entry name" value="Nucleotidylyl transferase"/>
    <property type="match status" value="1"/>
</dbReference>
<dbReference type="PROSITE" id="PS00178">
    <property type="entry name" value="AA_TRNA_LIGASE_I"/>
    <property type="match status" value="1"/>
</dbReference>
<evidence type="ECO:0000255" key="1">
    <source>
        <dbReference type="HAMAP-Rule" id="MF_00177"/>
    </source>
</evidence>
<keyword id="KW-0030">Aminoacyl-tRNA synthetase</keyword>
<keyword id="KW-0067">ATP-binding</keyword>
<keyword id="KW-0963">Cytoplasm</keyword>
<keyword id="KW-0436">Ligase</keyword>
<keyword id="KW-0547">Nucleotide-binding</keyword>
<keyword id="KW-0648">Protein biosynthesis</keyword>
<keyword id="KW-1185">Reference proteome</keyword>
<proteinExistence type="inferred from homology"/>
<feature type="chain" id="PRO_0000152750" description="Lysine--tRNA ligase">
    <location>
        <begin position="1"/>
        <end position="548"/>
    </location>
</feature>
<feature type="short sequence motif" description="'HIGH' region">
    <location>
        <begin position="43"/>
        <end position="51"/>
    </location>
</feature>
<feature type="short sequence motif" description="'KMSKS' region">
    <location>
        <begin position="308"/>
        <end position="312"/>
    </location>
</feature>
<gene>
    <name evidence="1" type="primary">lysS</name>
    <name type="ordered locus">VNG_2017G</name>
</gene>
<comment type="catalytic activity">
    <reaction evidence="1">
        <text>tRNA(Lys) + L-lysine + ATP = L-lysyl-tRNA(Lys) + AMP + diphosphate</text>
        <dbReference type="Rhea" id="RHEA:20792"/>
        <dbReference type="Rhea" id="RHEA-COMP:9696"/>
        <dbReference type="Rhea" id="RHEA-COMP:9697"/>
        <dbReference type="ChEBI" id="CHEBI:30616"/>
        <dbReference type="ChEBI" id="CHEBI:32551"/>
        <dbReference type="ChEBI" id="CHEBI:33019"/>
        <dbReference type="ChEBI" id="CHEBI:78442"/>
        <dbReference type="ChEBI" id="CHEBI:78529"/>
        <dbReference type="ChEBI" id="CHEBI:456215"/>
        <dbReference type="EC" id="6.1.1.6"/>
    </reaction>
</comment>
<comment type="subcellular location">
    <subcellularLocation>
        <location evidence="1">Cytoplasm</location>
    </subcellularLocation>
</comment>
<comment type="similarity">
    <text evidence="1">Belongs to the class-I aminoacyl-tRNA synthetase family.</text>
</comment>
<name>SYK_HALSA</name>